<comment type="function">
    <text evidence="2 10">Component of the 26S proteasome, a multiprotein complex involved in the ATP-dependent degradation of ubiquitinated proteins (PubMed:18497827). This complex plays a key role in the maintenance of protein homeostasis by removing misfolded or damaged proteins, which could impair cellular functions, and by removing proteins whose functions are no longer required (PubMed:18497827). Therefore, the proteasome participates in numerous cellular processes, including cell cycle progression, apoptosis, or DNA damage repair (PubMed:18497827). Within the complex, functions as a proteasomal ubiquitin receptor (PubMed:18497827). Engages and thus activates 19S-associated deubiquitinases UCHL5 and PSMD14 during protein degradation (By similarity). UCHL5 reversibly associate with the 19S regulatory particle whereas PSMD14 is an intrinsic subunit of the proteasome lid subcomplex (By similarity).</text>
</comment>
<comment type="subunit">
    <text evidence="2 10">Component of the 19S proteasome regulatory particle complex (By similarity). The 26S proteasome consists of a 20S core particle (CP) and two 19S regulatory subunits (RP) (By similarity). Interacts with the proteasomal scaffolding protein PSMD1 (PubMed:18497827). Interacts with deubiquitinase UCHL5; this interaction activates the auto-inhibited UCHL5 by deoligomerizing it (PubMed:18497827). Interacts with UBQLN2 and ubiquitin (PubMed:18497827).</text>
</comment>
<comment type="interaction">
    <interactant intactId="EBI-8762776">
        <id>Q9JKV1</id>
    </interactant>
    <interactant intactId="EBI-15703973">
        <id>Q99460-1</id>
        <label>PSMD1</label>
    </interactant>
    <organismsDiffer>true</organismsDiffer>
    <experiments>2</experiments>
</comment>
<comment type="subcellular location">
    <subcellularLocation>
        <location evidence="7">Cytoplasm</location>
    </subcellularLocation>
    <subcellularLocation>
        <location evidence="2">Nucleus</location>
    </subcellularLocation>
</comment>
<comment type="tissue specificity">
    <text evidence="8 9">Present in all tissues examined (at protein level).</text>
</comment>
<comment type="domain">
    <text evidence="10">The Pru (pleckstrin-like receptor for ubiquitin) domain mediates interactions with PSMD1 and ubiquitin. Preferential binding to the proximal subunit of 'Lys-48'-linked diubiquitin allows UCHL5 access to the distal subunit.</text>
</comment>
<comment type="PTM">
    <text evidence="7">Not N-glycosylated.</text>
</comment>
<comment type="PTM">
    <text evidence="7">Not O-glycosylated.</text>
</comment>
<comment type="PTM">
    <text evidence="2">Ubiquitinated by UBE3C in response to proteotoxic stress.</text>
</comment>
<comment type="similarity">
    <text evidence="11">Belongs to the ADRM1 family.</text>
</comment>
<comment type="caution">
    <text evidence="11">Although initially described as a cell membrane glycoprotein, ADRM1 is intracellular and non-glycosylated, and has probably no direct role in cell adhesion.</text>
</comment>
<feature type="initiator methionine" description="Removed" evidence="2">
    <location>
        <position position="1"/>
    </location>
</feature>
<feature type="chain" id="PRO_0000020632" description="Proteasomal ubiquitin receptor ADRM1">
    <location>
        <begin position="2"/>
        <end position="407"/>
    </location>
</feature>
<feature type="domain" description="Pru" evidence="5 10">
    <location>
        <begin position="18"/>
        <end position="131"/>
    </location>
</feature>
<feature type="domain" description="DEUBAD" evidence="4">
    <location>
        <begin position="277"/>
        <end position="391"/>
    </location>
</feature>
<feature type="region of interest" description="Disordered" evidence="6">
    <location>
        <begin position="196"/>
        <end position="259"/>
    </location>
</feature>
<feature type="region of interest" description="Interaction with UCHL5" evidence="1">
    <location>
        <begin position="362"/>
        <end position="407"/>
    </location>
</feature>
<feature type="region of interest" description="Disordered" evidence="6">
    <location>
        <begin position="381"/>
        <end position="407"/>
    </location>
</feature>
<feature type="compositionally biased region" description="Low complexity" evidence="6">
    <location>
        <begin position="196"/>
        <end position="254"/>
    </location>
</feature>
<feature type="compositionally biased region" description="Basic and acidic residues" evidence="6">
    <location>
        <begin position="387"/>
        <end position="398"/>
    </location>
</feature>
<feature type="modified residue" description="N-acetylthreonine" evidence="2">
    <location>
        <position position="2"/>
    </location>
</feature>
<feature type="modified residue" description="Phosphoserine" evidence="2">
    <location>
        <position position="15"/>
    </location>
</feature>
<feature type="modified residue" description="Phosphoserine" evidence="2">
    <location>
        <position position="140"/>
    </location>
</feature>
<feature type="modified residue" description="Phosphoserine" evidence="2">
    <location>
        <position position="211"/>
    </location>
</feature>
<feature type="modified residue" description="Phosphothreonine" evidence="2">
    <location>
        <position position="217"/>
    </location>
</feature>
<feature type="modified residue" description="Phosphoserine" evidence="3">
    <location>
        <position position="405"/>
    </location>
</feature>
<feature type="cross-link" description="Glycyl lysine isopeptide (Lys-Gly) (interchain with G-Cter in ubiquitin)" evidence="2">
    <location>
        <position position="34"/>
    </location>
</feature>
<feature type="sequence conflict" description="In Ref. 2; BAC35889." evidence="11" ref="2">
    <original>M</original>
    <variation>I</variation>
    <location>
        <position position="109"/>
    </location>
</feature>
<feature type="sequence conflict" description="In Ref. 2; BAE26653." evidence="11" ref="2">
    <original>L</original>
    <variation>I</variation>
    <location>
        <position position="171"/>
    </location>
</feature>
<feature type="sequence conflict" description="In Ref. 2; BAC35889." evidence="11" ref="2">
    <original>R</original>
    <variation>S</variation>
    <location>
        <position position="226"/>
    </location>
</feature>
<feature type="sequence conflict" description="In Ref. 1; AAF33401." evidence="11" ref="1">
    <original>F</original>
    <variation>I</variation>
    <location>
        <position position="359"/>
    </location>
</feature>
<feature type="strand" evidence="12">
    <location>
        <begin position="24"/>
        <end position="34"/>
    </location>
</feature>
<feature type="strand" evidence="12">
    <location>
        <begin position="37"/>
        <end position="40"/>
    </location>
</feature>
<feature type="strand" evidence="12">
    <location>
        <begin position="45"/>
        <end position="51"/>
    </location>
</feature>
<feature type="strand" evidence="12">
    <location>
        <begin position="57"/>
        <end position="63"/>
    </location>
</feature>
<feature type="turn" evidence="12">
    <location>
        <begin position="64"/>
        <end position="66"/>
    </location>
</feature>
<feature type="strand" evidence="12">
    <location>
        <begin position="69"/>
        <end position="74"/>
    </location>
</feature>
<feature type="strand" evidence="12">
    <location>
        <begin position="79"/>
        <end position="84"/>
    </location>
</feature>
<feature type="strand" evidence="12">
    <location>
        <begin position="93"/>
        <end position="98"/>
    </location>
</feature>
<feature type="turn" evidence="12">
    <location>
        <begin position="99"/>
        <end position="101"/>
    </location>
</feature>
<feature type="strand" evidence="12">
    <location>
        <begin position="104"/>
        <end position="109"/>
    </location>
</feature>
<feature type="strand" evidence="12">
    <location>
        <begin position="111"/>
        <end position="114"/>
    </location>
</feature>
<feature type="helix" evidence="12">
    <location>
        <begin position="117"/>
        <end position="129"/>
    </location>
</feature>
<organism>
    <name type="scientific">Mus musculus</name>
    <name type="common">Mouse</name>
    <dbReference type="NCBI Taxonomy" id="10090"/>
    <lineage>
        <taxon>Eukaryota</taxon>
        <taxon>Metazoa</taxon>
        <taxon>Chordata</taxon>
        <taxon>Craniata</taxon>
        <taxon>Vertebrata</taxon>
        <taxon>Euteleostomi</taxon>
        <taxon>Mammalia</taxon>
        <taxon>Eutheria</taxon>
        <taxon>Euarchontoglires</taxon>
        <taxon>Glires</taxon>
        <taxon>Rodentia</taxon>
        <taxon>Myomorpha</taxon>
        <taxon>Muroidea</taxon>
        <taxon>Muridae</taxon>
        <taxon>Murinae</taxon>
        <taxon>Mus</taxon>
        <taxon>Mus</taxon>
    </lineage>
</organism>
<accession>Q9JKV1</accession>
<accession>Q3UKZ8</accession>
<accession>Q8BPH8</accession>
<accession>Q922A7</accession>
<reference key="1">
    <citation type="journal article" date="1999" name="Clin. Exp. Metastasis">
        <title>Functional cloning of ARM-1, an adhesion-regulating molecule upregulated in metastatic tumor cells.</title>
        <authorList>
            <person name="Simins A.B."/>
            <person name="Weighardt H."/>
            <person name="Weidner K.M."/>
            <person name="Weidle U.H."/>
            <person name="Holzmann B."/>
        </authorList>
    </citation>
    <scope>NUCLEOTIDE SEQUENCE [MRNA]</scope>
</reference>
<reference key="2">
    <citation type="journal article" date="2005" name="Science">
        <title>The transcriptional landscape of the mammalian genome.</title>
        <authorList>
            <person name="Carninci P."/>
            <person name="Kasukawa T."/>
            <person name="Katayama S."/>
            <person name="Gough J."/>
            <person name="Frith M.C."/>
            <person name="Maeda N."/>
            <person name="Oyama R."/>
            <person name="Ravasi T."/>
            <person name="Lenhard B."/>
            <person name="Wells C."/>
            <person name="Kodzius R."/>
            <person name="Shimokawa K."/>
            <person name="Bajic V.B."/>
            <person name="Brenner S.E."/>
            <person name="Batalov S."/>
            <person name="Forrest A.R."/>
            <person name="Zavolan M."/>
            <person name="Davis M.J."/>
            <person name="Wilming L.G."/>
            <person name="Aidinis V."/>
            <person name="Allen J.E."/>
            <person name="Ambesi-Impiombato A."/>
            <person name="Apweiler R."/>
            <person name="Aturaliya R.N."/>
            <person name="Bailey T.L."/>
            <person name="Bansal M."/>
            <person name="Baxter L."/>
            <person name="Beisel K.W."/>
            <person name="Bersano T."/>
            <person name="Bono H."/>
            <person name="Chalk A.M."/>
            <person name="Chiu K.P."/>
            <person name="Choudhary V."/>
            <person name="Christoffels A."/>
            <person name="Clutterbuck D.R."/>
            <person name="Crowe M.L."/>
            <person name="Dalla E."/>
            <person name="Dalrymple B.P."/>
            <person name="de Bono B."/>
            <person name="Della Gatta G."/>
            <person name="di Bernardo D."/>
            <person name="Down T."/>
            <person name="Engstrom P."/>
            <person name="Fagiolini M."/>
            <person name="Faulkner G."/>
            <person name="Fletcher C.F."/>
            <person name="Fukushima T."/>
            <person name="Furuno M."/>
            <person name="Futaki S."/>
            <person name="Gariboldi M."/>
            <person name="Georgii-Hemming P."/>
            <person name="Gingeras T.R."/>
            <person name="Gojobori T."/>
            <person name="Green R.E."/>
            <person name="Gustincich S."/>
            <person name="Harbers M."/>
            <person name="Hayashi Y."/>
            <person name="Hensch T.K."/>
            <person name="Hirokawa N."/>
            <person name="Hill D."/>
            <person name="Huminiecki L."/>
            <person name="Iacono M."/>
            <person name="Ikeo K."/>
            <person name="Iwama A."/>
            <person name="Ishikawa T."/>
            <person name="Jakt M."/>
            <person name="Kanapin A."/>
            <person name="Katoh M."/>
            <person name="Kawasawa Y."/>
            <person name="Kelso J."/>
            <person name="Kitamura H."/>
            <person name="Kitano H."/>
            <person name="Kollias G."/>
            <person name="Krishnan S.P."/>
            <person name="Kruger A."/>
            <person name="Kummerfeld S.K."/>
            <person name="Kurochkin I.V."/>
            <person name="Lareau L.F."/>
            <person name="Lazarevic D."/>
            <person name="Lipovich L."/>
            <person name="Liu J."/>
            <person name="Liuni S."/>
            <person name="McWilliam S."/>
            <person name="Madan Babu M."/>
            <person name="Madera M."/>
            <person name="Marchionni L."/>
            <person name="Matsuda H."/>
            <person name="Matsuzawa S."/>
            <person name="Miki H."/>
            <person name="Mignone F."/>
            <person name="Miyake S."/>
            <person name="Morris K."/>
            <person name="Mottagui-Tabar S."/>
            <person name="Mulder N."/>
            <person name="Nakano N."/>
            <person name="Nakauchi H."/>
            <person name="Ng P."/>
            <person name="Nilsson R."/>
            <person name="Nishiguchi S."/>
            <person name="Nishikawa S."/>
            <person name="Nori F."/>
            <person name="Ohara O."/>
            <person name="Okazaki Y."/>
            <person name="Orlando V."/>
            <person name="Pang K.C."/>
            <person name="Pavan W.J."/>
            <person name="Pavesi G."/>
            <person name="Pesole G."/>
            <person name="Petrovsky N."/>
            <person name="Piazza S."/>
            <person name="Reed J."/>
            <person name="Reid J.F."/>
            <person name="Ring B.Z."/>
            <person name="Ringwald M."/>
            <person name="Rost B."/>
            <person name="Ruan Y."/>
            <person name="Salzberg S.L."/>
            <person name="Sandelin A."/>
            <person name="Schneider C."/>
            <person name="Schoenbach C."/>
            <person name="Sekiguchi K."/>
            <person name="Semple C.A."/>
            <person name="Seno S."/>
            <person name="Sessa L."/>
            <person name="Sheng Y."/>
            <person name="Shibata Y."/>
            <person name="Shimada H."/>
            <person name="Shimada K."/>
            <person name="Silva D."/>
            <person name="Sinclair B."/>
            <person name="Sperling S."/>
            <person name="Stupka E."/>
            <person name="Sugiura K."/>
            <person name="Sultana R."/>
            <person name="Takenaka Y."/>
            <person name="Taki K."/>
            <person name="Tammoja K."/>
            <person name="Tan S.L."/>
            <person name="Tang S."/>
            <person name="Taylor M.S."/>
            <person name="Tegner J."/>
            <person name="Teichmann S.A."/>
            <person name="Ueda H.R."/>
            <person name="van Nimwegen E."/>
            <person name="Verardo R."/>
            <person name="Wei C.L."/>
            <person name="Yagi K."/>
            <person name="Yamanishi H."/>
            <person name="Zabarovsky E."/>
            <person name="Zhu S."/>
            <person name="Zimmer A."/>
            <person name="Hide W."/>
            <person name="Bult C."/>
            <person name="Grimmond S.M."/>
            <person name="Teasdale R.D."/>
            <person name="Liu E.T."/>
            <person name="Brusic V."/>
            <person name="Quackenbush J."/>
            <person name="Wahlestedt C."/>
            <person name="Mattick J.S."/>
            <person name="Hume D.A."/>
            <person name="Kai C."/>
            <person name="Sasaki D."/>
            <person name="Tomaru Y."/>
            <person name="Fukuda S."/>
            <person name="Kanamori-Katayama M."/>
            <person name="Suzuki M."/>
            <person name="Aoki J."/>
            <person name="Arakawa T."/>
            <person name="Iida J."/>
            <person name="Imamura K."/>
            <person name="Itoh M."/>
            <person name="Kato T."/>
            <person name="Kawaji H."/>
            <person name="Kawagashira N."/>
            <person name="Kawashima T."/>
            <person name="Kojima M."/>
            <person name="Kondo S."/>
            <person name="Konno H."/>
            <person name="Nakano K."/>
            <person name="Ninomiya N."/>
            <person name="Nishio T."/>
            <person name="Okada M."/>
            <person name="Plessy C."/>
            <person name="Shibata K."/>
            <person name="Shiraki T."/>
            <person name="Suzuki S."/>
            <person name="Tagami M."/>
            <person name="Waki K."/>
            <person name="Watahiki A."/>
            <person name="Okamura-Oho Y."/>
            <person name="Suzuki H."/>
            <person name="Kawai J."/>
            <person name="Hayashizaki Y."/>
        </authorList>
    </citation>
    <scope>NUCLEOTIDE SEQUENCE [LARGE SCALE MRNA]</scope>
    <source>
        <strain>C57BL/6J</strain>
        <tissue>Embryo</tissue>
    </source>
</reference>
<reference key="3">
    <citation type="journal article" date="2009" name="PLoS Biol.">
        <title>Lineage-specific biology revealed by a finished genome assembly of the mouse.</title>
        <authorList>
            <person name="Church D.M."/>
            <person name="Goodstadt L."/>
            <person name="Hillier L.W."/>
            <person name="Zody M.C."/>
            <person name="Goldstein S."/>
            <person name="She X."/>
            <person name="Bult C.J."/>
            <person name="Agarwala R."/>
            <person name="Cherry J.L."/>
            <person name="DiCuccio M."/>
            <person name="Hlavina W."/>
            <person name="Kapustin Y."/>
            <person name="Meric P."/>
            <person name="Maglott D."/>
            <person name="Birtle Z."/>
            <person name="Marques A.C."/>
            <person name="Graves T."/>
            <person name="Zhou S."/>
            <person name="Teague B."/>
            <person name="Potamousis K."/>
            <person name="Churas C."/>
            <person name="Place M."/>
            <person name="Herschleb J."/>
            <person name="Runnheim R."/>
            <person name="Forrest D."/>
            <person name="Amos-Landgraf J."/>
            <person name="Schwartz D.C."/>
            <person name="Cheng Z."/>
            <person name="Lindblad-Toh K."/>
            <person name="Eichler E.E."/>
            <person name="Ponting C.P."/>
        </authorList>
    </citation>
    <scope>NUCLEOTIDE SEQUENCE [LARGE SCALE GENOMIC DNA]</scope>
    <source>
        <strain>C57BL/6J</strain>
    </source>
</reference>
<reference key="4">
    <citation type="journal article" date="2004" name="Genome Res.">
        <title>The status, quality, and expansion of the NIH full-length cDNA project: the Mammalian Gene Collection (MGC).</title>
        <authorList>
            <consortium name="The MGC Project Team"/>
        </authorList>
    </citation>
    <scope>NUCLEOTIDE SEQUENCE [LARGE SCALE MRNA]</scope>
    <source>
        <strain>Czech II</strain>
        <tissue>Mammary tumor</tissue>
    </source>
</reference>
<reference key="5">
    <citation type="journal article" date="2005" name="FEBS J.">
        <title>Adhesion properties of adhesion-regulating molecule 1 protein on endothelial cells.</title>
        <authorList>
            <person name="Lamerant N."/>
            <person name="Kieda C."/>
        </authorList>
    </citation>
    <scope>SUBCELLULAR LOCATION</scope>
    <scope>LACK OF GLYCOSYLATION</scope>
</reference>
<reference key="6">
    <citation type="journal article" date="2006" name="EMBO J.">
        <title>hRpn13/ADRM1/GP110 is a novel proteasome subunit that binds the deubiquitinating enzyme, UCH37.</title>
        <authorList>
            <person name="Qiu X.-B."/>
            <person name="Ouyang S.-Y."/>
            <person name="Li C.-J."/>
            <person name="Miao S."/>
            <person name="Wang L."/>
            <person name="Goldberg A.L."/>
        </authorList>
    </citation>
    <scope>TISSUE SPECIFICITY</scope>
</reference>
<reference key="7">
    <citation type="journal article" date="2006" name="J. Mol. Biol.">
        <title>Adrm1, a putative cell adhesion regulating protein, is a novel proteasome-associated factor.</title>
        <authorList>
            <person name="Joergensen J.P."/>
            <person name="Lauridsen A.-M."/>
            <person name="Kristensen P."/>
            <person name="Dissing K."/>
            <person name="Johnsen A.H."/>
            <person name="Hendil K.B."/>
            <person name="Hartmann-Petersen R."/>
        </authorList>
    </citation>
    <scope>TISSUE SPECIFICITY</scope>
</reference>
<reference key="8">
    <citation type="journal article" date="2008" name="Nature">
        <title>Ubiquitin docking at the proteasome through a novel pleckstrin-homology domain interaction.</title>
        <authorList>
            <person name="Schreiner P."/>
            <person name="Chen X."/>
            <person name="Husnjak K."/>
            <person name="Randles L."/>
            <person name="Zhang N."/>
            <person name="Elsasser S."/>
            <person name="Finley D."/>
            <person name="Dikic I."/>
            <person name="Walters K.J."/>
            <person name="Groll M."/>
        </authorList>
    </citation>
    <scope>STRUCTURE BY NMR OF 22-130</scope>
    <scope>X-RAY CRYSTALLOGRAPHY (1.7 ANGSTROMS) OF 1-150</scope>
    <scope>FUNCTION</scope>
    <scope>REGION</scope>
    <scope>INTERACTION WITH UBIQUITIN; UCHL5 AND PSMD1</scope>
</reference>
<gene>
    <name type="primary">Adrm1</name>
    <name type="synonym">Gp110</name>
</gene>
<evidence type="ECO:0000250" key="1"/>
<evidence type="ECO:0000250" key="2">
    <source>
        <dbReference type="UniProtKB" id="Q16186"/>
    </source>
</evidence>
<evidence type="ECO:0000250" key="3">
    <source>
        <dbReference type="UniProtKB" id="Q9JMB5"/>
    </source>
</evidence>
<evidence type="ECO:0000255" key="4">
    <source>
        <dbReference type="PROSITE-ProRule" id="PRU01264"/>
    </source>
</evidence>
<evidence type="ECO:0000255" key="5">
    <source>
        <dbReference type="PROSITE-ProRule" id="PRU01265"/>
    </source>
</evidence>
<evidence type="ECO:0000256" key="6">
    <source>
        <dbReference type="SAM" id="MobiDB-lite"/>
    </source>
</evidence>
<evidence type="ECO:0000269" key="7">
    <source>
    </source>
</evidence>
<evidence type="ECO:0000269" key="8">
    <source>
    </source>
</evidence>
<evidence type="ECO:0000269" key="9">
    <source>
    </source>
</evidence>
<evidence type="ECO:0000269" key="10">
    <source>
    </source>
</evidence>
<evidence type="ECO:0000305" key="11"/>
<evidence type="ECO:0007829" key="12">
    <source>
        <dbReference type="PDB" id="2R2Y"/>
    </source>
</evidence>
<keyword id="KW-0002">3D-structure</keyword>
<keyword id="KW-0007">Acetylation</keyword>
<keyword id="KW-0963">Cytoplasm</keyword>
<keyword id="KW-1017">Isopeptide bond</keyword>
<keyword id="KW-0539">Nucleus</keyword>
<keyword id="KW-0597">Phosphoprotein</keyword>
<keyword id="KW-0647">Proteasome</keyword>
<keyword id="KW-1185">Reference proteome</keyword>
<keyword id="KW-0832">Ubl conjugation</keyword>
<sequence length="407" mass="42060">MTTSGALFPSLVPGSRGSSTKYLVEFRAGKMSLKGTTVTPDKRKGLVYIQQTDDSLIHFCWKDRTSGTVEDDLIIFPDDCEFKRVPQCPSGRVYVLKFKAGSKRLFFWMQEPKTDQDEEHCRKVNECLNNPPMPGSLGASGSSGHELSALGGEGGLQSLLGNMSHSQLMQLIGPAGLGGLGGLGALTGPGLASLLGSSGPPASSSSSSSRSQSAAVTPSSSTSSARATPAPSAPAAASATSPSPAPSSGNGTSTAASPTQPIQLSDLQSILATMNVPAGPGGSQQVDLASVLTPEIMAPILANADVQERLLPYLPSGESLPQTADEIQNTLTSPQFQQALGMFSAALASGQLGPLMCQFGLPAEAVEAANKGDVEAFAKAMQNNAKSDPKEGDTKDKKDEEEDMSLD</sequence>
<proteinExistence type="evidence at protein level"/>
<protein>
    <recommendedName>
        <fullName>Proteasomal ubiquitin receptor ADRM1</fullName>
    </recommendedName>
    <alternativeName>
        <fullName>110 kDa cell membrane glycoprotein</fullName>
        <shortName>Gp110</shortName>
    </alternativeName>
    <alternativeName>
        <fullName>Adhesion-regulating molecule 1</fullName>
        <shortName>ARM-1</shortName>
    </alternativeName>
    <alternativeName>
        <fullName>Rpn13 homolog</fullName>
    </alternativeName>
</protein>
<name>ADRM1_MOUSE</name>
<dbReference type="EMBL" id="AF225959">
    <property type="protein sequence ID" value="AAF33401.1"/>
    <property type="molecule type" value="mRNA"/>
</dbReference>
<dbReference type="EMBL" id="AK075674">
    <property type="protein sequence ID" value="BAC35889.1"/>
    <property type="molecule type" value="mRNA"/>
</dbReference>
<dbReference type="EMBL" id="AK145474">
    <property type="protein sequence ID" value="BAE26457.1"/>
    <property type="molecule type" value="mRNA"/>
</dbReference>
<dbReference type="EMBL" id="AK145792">
    <property type="protein sequence ID" value="BAE26653.1"/>
    <property type="molecule type" value="mRNA"/>
</dbReference>
<dbReference type="EMBL" id="AK166878">
    <property type="protein sequence ID" value="BAE39089.1"/>
    <property type="molecule type" value="mRNA"/>
</dbReference>
<dbReference type="EMBL" id="AL663027">
    <property type="status" value="NOT_ANNOTATED_CDS"/>
    <property type="molecule type" value="Genomic_DNA"/>
</dbReference>
<dbReference type="EMBL" id="BC008974">
    <property type="protein sequence ID" value="AAH08974.1"/>
    <property type="molecule type" value="mRNA"/>
</dbReference>
<dbReference type="EMBL" id="BC031517">
    <property type="protein sequence ID" value="AAH31517.1"/>
    <property type="molecule type" value="mRNA"/>
</dbReference>
<dbReference type="CCDS" id="CCDS17171.1"/>
<dbReference type="RefSeq" id="NP_062796.2">
    <property type="nucleotide sequence ID" value="NM_019822.3"/>
</dbReference>
<dbReference type="PDB" id="2R2Y">
    <property type="method" value="X-ray"/>
    <property type="resolution" value="1.70 A"/>
    <property type="chains" value="A=2-150"/>
</dbReference>
<dbReference type="PDB" id="2Z59">
    <property type="method" value="NMR"/>
    <property type="chains" value="A=22-130"/>
</dbReference>
<dbReference type="PDBsum" id="2R2Y"/>
<dbReference type="PDBsum" id="2Z59"/>
<dbReference type="SMR" id="Q9JKV1"/>
<dbReference type="BioGRID" id="207978">
    <property type="interactions" value="64"/>
</dbReference>
<dbReference type="DIP" id="DIP-60625N"/>
<dbReference type="FunCoup" id="Q9JKV1">
    <property type="interactions" value="2810"/>
</dbReference>
<dbReference type="IntAct" id="Q9JKV1">
    <property type="interactions" value="19"/>
</dbReference>
<dbReference type="STRING" id="10090.ENSMUSP00000050076"/>
<dbReference type="GlyGen" id="Q9JKV1">
    <property type="glycosylation" value="6 sites, 1 O-linked glycan (4 sites)"/>
</dbReference>
<dbReference type="iPTMnet" id="Q9JKV1"/>
<dbReference type="PhosphoSitePlus" id="Q9JKV1"/>
<dbReference type="SwissPalm" id="Q9JKV1"/>
<dbReference type="jPOST" id="Q9JKV1"/>
<dbReference type="PaxDb" id="10090-ENSMUSP00000050076"/>
<dbReference type="PeptideAtlas" id="Q9JKV1"/>
<dbReference type="ProteomicsDB" id="296116"/>
<dbReference type="Pumba" id="Q9JKV1"/>
<dbReference type="DNASU" id="56436"/>
<dbReference type="Ensembl" id="ENSMUST00000061437.5">
    <property type="protein sequence ID" value="ENSMUSP00000050076.5"/>
    <property type="gene ID" value="ENSMUSG00000039041.16"/>
</dbReference>
<dbReference type="GeneID" id="56436"/>
<dbReference type="KEGG" id="mmu:56436"/>
<dbReference type="UCSC" id="uc008oin.1">
    <property type="organism name" value="mouse"/>
</dbReference>
<dbReference type="AGR" id="MGI:1929289"/>
<dbReference type="CTD" id="11047"/>
<dbReference type="MGI" id="MGI:1929289">
    <property type="gene designation" value="Adrm1"/>
</dbReference>
<dbReference type="VEuPathDB" id="HostDB:ENSMUSG00000039041"/>
<dbReference type="eggNOG" id="KOG3037">
    <property type="taxonomic scope" value="Eukaryota"/>
</dbReference>
<dbReference type="GeneTree" id="ENSGT00390000013839"/>
<dbReference type="HOGENOM" id="CLU_041798_2_0_1"/>
<dbReference type="InParanoid" id="Q9JKV1"/>
<dbReference type="OMA" id="SNQRHFF"/>
<dbReference type="OrthoDB" id="340431at2759"/>
<dbReference type="PhylomeDB" id="Q9JKV1"/>
<dbReference type="TreeFam" id="TF313410"/>
<dbReference type="Reactome" id="R-MMU-1169091">
    <property type="pathway name" value="Activation of NF-kappaB in B cells"/>
</dbReference>
<dbReference type="Reactome" id="R-MMU-1234176">
    <property type="pathway name" value="Oxygen-dependent proline hydroxylation of Hypoxia-inducible Factor Alpha"/>
</dbReference>
<dbReference type="Reactome" id="R-MMU-1236978">
    <property type="pathway name" value="Cross-presentation of soluble exogenous antigens (endosomes)"/>
</dbReference>
<dbReference type="Reactome" id="R-MMU-174084">
    <property type="pathway name" value="Autodegradation of Cdh1 by Cdh1:APC/C"/>
</dbReference>
<dbReference type="Reactome" id="R-MMU-174154">
    <property type="pathway name" value="APC/C:Cdc20 mediated degradation of Securin"/>
</dbReference>
<dbReference type="Reactome" id="R-MMU-174178">
    <property type="pathway name" value="APC/C:Cdh1 mediated degradation of Cdc20 and other APC/C:Cdh1 targeted proteins in late mitosis/early G1"/>
</dbReference>
<dbReference type="Reactome" id="R-MMU-174184">
    <property type="pathway name" value="Cdc20:Phospho-APC/C mediated degradation of Cyclin A"/>
</dbReference>
<dbReference type="Reactome" id="R-MMU-187577">
    <property type="pathway name" value="SCF(Skp2)-mediated degradation of p27/p21"/>
</dbReference>
<dbReference type="Reactome" id="R-MMU-195253">
    <property type="pathway name" value="Degradation of beta-catenin by the destruction complex"/>
</dbReference>
<dbReference type="Reactome" id="R-MMU-202424">
    <property type="pathway name" value="Downstream TCR signaling"/>
</dbReference>
<dbReference type="Reactome" id="R-MMU-2467813">
    <property type="pathway name" value="Separation of Sister Chromatids"/>
</dbReference>
<dbReference type="Reactome" id="R-MMU-2871837">
    <property type="pathway name" value="FCERI mediated NF-kB activation"/>
</dbReference>
<dbReference type="Reactome" id="R-MMU-349425">
    <property type="pathway name" value="Autodegradation of the E3 ubiquitin ligase COP1"/>
</dbReference>
<dbReference type="Reactome" id="R-MMU-350562">
    <property type="pathway name" value="Regulation of ornithine decarboxylase (ODC)"/>
</dbReference>
<dbReference type="Reactome" id="R-MMU-382556">
    <property type="pathway name" value="ABC-family proteins mediated transport"/>
</dbReference>
<dbReference type="Reactome" id="R-MMU-450408">
    <property type="pathway name" value="AUF1 (hnRNP D0) binds and destabilizes mRNA"/>
</dbReference>
<dbReference type="Reactome" id="R-MMU-4608870">
    <property type="pathway name" value="Asymmetric localization of PCP proteins"/>
</dbReference>
<dbReference type="Reactome" id="R-MMU-4641257">
    <property type="pathway name" value="Degradation of AXIN"/>
</dbReference>
<dbReference type="Reactome" id="R-MMU-4641258">
    <property type="pathway name" value="Degradation of DVL"/>
</dbReference>
<dbReference type="Reactome" id="R-MMU-5358346">
    <property type="pathway name" value="Hedgehog ligand biogenesis"/>
</dbReference>
<dbReference type="Reactome" id="R-MMU-5607761">
    <property type="pathway name" value="Dectin-1 mediated noncanonical NF-kB signaling"/>
</dbReference>
<dbReference type="Reactome" id="R-MMU-5607764">
    <property type="pathway name" value="CLEC7A (Dectin-1) signaling"/>
</dbReference>
<dbReference type="Reactome" id="R-MMU-5610780">
    <property type="pathway name" value="Degradation of GLI1 by the proteasome"/>
</dbReference>
<dbReference type="Reactome" id="R-MMU-5610785">
    <property type="pathway name" value="GLI3 is processed to GLI3R by the proteasome"/>
</dbReference>
<dbReference type="Reactome" id="R-MMU-5632684">
    <property type="pathway name" value="Hedgehog 'on' state"/>
</dbReference>
<dbReference type="Reactome" id="R-MMU-5658442">
    <property type="pathway name" value="Regulation of RAS by GAPs"/>
</dbReference>
<dbReference type="Reactome" id="R-MMU-5668541">
    <property type="pathway name" value="TNFR2 non-canonical NF-kB pathway"/>
</dbReference>
<dbReference type="Reactome" id="R-MMU-5676590">
    <property type="pathway name" value="NIK--&gt;noncanonical NF-kB signaling"/>
</dbReference>
<dbReference type="Reactome" id="R-MMU-5687128">
    <property type="pathway name" value="MAPK6/MAPK4 signaling"/>
</dbReference>
<dbReference type="Reactome" id="R-MMU-5689603">
    <property type="pathway name" value="UCH proteinases"/>
</dbReference>
<dbReference type="Reactome" id="R-MMU-5689880">
    <property type="pathway name" value="Ub-specific processing proteases"/>
</dbReference>
<dbReference type="Reactome" id="R-MMU-68867">
    <property type="pathway name" value="Assembly of the pre-replicative complex"/>
</dbReference>
<dbReference type="Reactome" id="R-MMU-68949">
    <property type="pathway name" value="Orc1 removal from chromatin"/>
</dbReference>
<dbReference type="Reactome" id="R-MMU-69017">
    <property type="pathway name" value="CDK-mediated phosphorylation and removal of Cdc6"/>
</dbReference>
<dbReference type="Reactome" id="R-MMU-69481">
    <property type="pathway name" value="G2/M Checkpoints"/>
</dbReference>
<dbReference type="Reactome" id="R-MMU-69601">
    <property type="pathway name" value="Ubiquitin Mediated Degradation of Phosphorylated Cdc25A"/>
</dbReference>
<dbReference type="Reactome" id="R-MMU-75815">
    <property type="pathway name" value="Ubiquitin-dependent degradation of Cyclin D"/>
</dbReference>
<dbReference type="Reactome" id="R-MMU-8852276">
    <property type="pathway name" value="The role of GTSE1 in G2/M progression after G2 checkpoint"/>
</dbReference>
<dbReference type="Reactome" id="R-MMU-8854050">
    <property type="pathway name" value="FBXL7 down-regulates AURKA during mitotic entry and in early mitosis"/>
</dbReference>
<dbReference type="Reactome" id="R-MMU-8939236">
    <property type="pathway name" value="RUNX1 regulates transcription of genes involved in differentiation of HSCs"/>
</dbReference>
<dbReference type="Reactome" id="R-MMU-8939902">
    <property type="pathway name" value="Regulation of RUNX2 expression and activity"/>
</dbReference>
<dbReference type="Reactome" id="R-MMU-8941858">
    <property type="pathway name" value="Regulation of RUNX3 expression and activity"/>
</dbReference>
<dbReference type="Reactome" id="R-MMU-8948751">
    <property type="pathway name" value="Regulation of PTEN stability and activity"/>
</dbReference>
<dbReference type="Reactome" id="R-MMU-8951664">
    <property type="pathway name" value="Neddylation"/>
</dbReference>
<dbReference type="Reactome" id="R-MMU-9020702">
    <property type="pathway name" value="Interleukin-1 signaling"/>
</dbReference>
<dbReference type="Reactome" id="R-MMU-9755511">
    <property type="pathway name" value="KEAP1-NFE2L2 pathway"/>
</dbReference>
<dbReference type="Reactome" id="R-MMU-9762114">
    <property type="pathway name" value="GSK3B and BTRC:CUL1-mediated-degradation of NFE2L2"/>
</dbReference>
<dbReference type="Reactome" id="R-MMU-983168">
    <property type="pathway name" value="Antigen processing: Ubiquitination &amp; Proteasome degradation"/>
</dbReference>
<dbReference type="Reactome" id="R-MMU-9907900">
    <property type="pathway name" value="Proteasome assembly"/>
</dbReference>
<dbReference type="BioGRID-ORCS" id="56436">
    <property type="hits" value="8 hits in 80 CRISPR screens"/>
</dbReference>
<dbReference type="ChiTaRS" id="Adrm1">
    <property type="organism name" value="mouse"/>
</dbReference>
<dbReference type="EvolutionaryTrace" id="Q9JKV1"/>
<dbReference type="PRO" id="PR:Q9JKV1"/>
<dbReference type="Proteomes" id="UP000000589">
    <property type="component" value="Chromosome 2"/>
</dbReference>
<dbReference type="RNAct" id="Q9JKV1">
    <property type="molecule type" value="protein"/>
</dbReference>
<dbReference type="Bgee" id="ENSMUSG00000039041">
    <property type="expression patterns" value="Expressed in hindlimb stylopod muscle and 86 other cell types or tissues"/>
</dbReference>
<dbReference type="GO" id="GO:0005737">
    <property type="term" value="C:cytoplasm"/>
    <property type="evidence" value="ECO:0007669"/>
    <property type="project" value="UniProtKB-SubCell"/>
</dbReference>
<dbReference type="GO" id="GO:0005634">
    <property type="term" value="C:nucleus"/>
    <property type="evidence" value="ECO:0007669"/>
    <property type="project" value="UniProtKB-SubCell"/>
</dbReference>
<dbReference type="GO" id="GO:0000502">
    <property type="term" value="C:proteasome complex"/>
    <property type="evidence" value="ECO:0007669"/>
    <property type="project" value="UniProtKB-KW"/>
</dbReference>
<dbReference type="GO" id="GO:0060612">
    <property type="term" value="P:adipose tissue development"/>
    <property type="evidence" value="ECO:0000315"/>
    <property type="project" value="BHF-UCL"/>
</dbReference>
<dbReference type="GO" id="GO:0042699">
    <property type="term" value="P:follicle-stimulating hormone signaling pathway"/>
    <property type="evidence" value="ECO:0000315"/>
    <property type="project" value="BHF-UCL"/>
</dbReference>
<dbReference type="GO" id="GO:0048477">
    <property type="term" value="P:oogenesis"/>
    <property type="evidence" value="ECO:0000315"/>
    <property type="project" value="BHF-UCL"/>
</dbReference>
<dbReference type="GO" id="GO:0001541">
    <property type="term" value="P:ovarian follicle development"/>
    <property type="evidence" value="ECO:0000315"/>
    <property type="project" value="BHF-UCL"/>
</dbReference>
<dbReference type="GO" id="GO:0060399">
    <property type="term" value="P:positive regulation of growth hormone receptor signaling pathway"/>
    <property type="evidence" value="ECO:0000315"/>
    <property type="project" value="BHF-UCL"/>
</dbReference>
<dbReference type="GO" id="GO:0033081">
    <property type="term" value="P:regulation of T cell differentiation in thymus"/>
    <property type="evidence" value="ECO:0000315"/>
    <property type="project" value="BHF-UCL"/>
</dbReference>
<dbReference type="GO" id="GO:0072520">
    <property type="term" value="P:seminiferous tubule development"/>
    <property type="evidence" value="ECO:0000315"/>
    <property type="project" value="BHF-UCL"/>
</dbReference>
<dbReference type="GO" id="GO:0060009">
    <property type="term" value="P:Sertoli cell development"/>
    <property type="evidence" value="ECO:0000315"/>
    <property type="project" value="BHF-UCL"/>
</dbReference>
<dbReference type="GO" id="GO:0007286">
    <property type="term" value="P:spermatid development"/>
    <property type="evidence" value="ECO:0000315"/>
    <property type="project" value="BHF-UCL"/>
</dbReference>
<dbReference type="GO" id="GO:0048538">
    <property type="term" value="P:thymus development"/>
    <property type="evidence" value="ECO:0000315"/>
    <property type="project" value="BHF-UCL"/>
</dbReference>
<dbReference type="CDD" id="cd13314">
    <property type="entry name" value="PH_Rpn13"/>
    <property type="match status" value="1"/>
</dbReference>
<dbReference type="FunFam" id="1.10.2020.20:FF:000001">
    <property type="entry name" value="Proteasomal ubiquitin receptor ADRM1"/>
    <property type="match status" value="1"/>
</dbReference>
<dbReference type="FunFam" id="2.30.29.70:FF:000001">
    <property type="entry name" value="Proteasomal ubiquitin receptor ADRM1"/>
    <property type="match status" value="1"/>
</dbReference>
<dbReference type="Gene3D" id="1.10.2020.20">
    <property type="match status" value="1"/>
</dbReference>
<dbReference type="Gene3D" id="2.30.29.70">
    <property type="entry name" value="Proteasomal ubiquitin receptor Rpn13/ADRM1"/>
    <property type="match status" value="1"/>
</dbReference>
<dbReference type="InterPro" id="IPR044867">
    <property type="entry name" value="DEUBAD_dom"/>
</dbReference>
<dbReference type="InterPro" id="IPR006773">
    <property type="entry name" value="Rpn13/ADRM1"/>
</dbReference>
<dbReference type="InterPro" id="IPR044868">
    <property type="entry name" value="Rpn13/ADRM1_Pru"/>
</dbReference>
<dbReference type="InterPro" id="IPR038633">
    <property type="entry name" value="Rpn13/ADRM1_Pru_sf"/>
</dbReference>
<dbReference type="InterPro" id="IPR032368">
    <property type="entry name" value="RPN13_DEUBAD"/>
</dbReference>
<dbReference type="InterPro" id="IPR038108">
    <property type="entry name" value="RPN13_DEUBAD_sf"/>
</dbReference>
<dbReference type="PANTHER" id="PTHR12225">
    <property type="entry name" value="ADHESION REGULATING MOLECULE 1 110 KDA CELL MEMBRANE GLYCOPROTEIN"/>
    <property type="match status" value="1"/>
</dbReference>
<dbReference type="PANTHER" id="PTHR12225:SF0">
    <property type="entry name" value="PROTEASOMAL UBIQUITIN RECEPTOR ADRM1"/>
    <property type="match status" value="1"/>
</dbReference>
<dbReference type="Pfam" id="PF04683">
    <property type="entry name" value="Rpn13_ADRM1_Pru"/>
    <property type="match status" value="1"/>
</dbReference>
<dbReference type="Pfam" id="PF16550">
    <property type="entry name" value="RPN13_C"/>
    <property type="match status" value="1"/>
</dbReference>
<dbReference type="PROSITE" id="PS51916">
    <property type="entry name" value="DEUBAD"/>
    <property type="match status" value="1"/>
</dbReference>
<dbReference type="PROSITE" id="PS51917">
    <property type="entry name" value="PRU"/>
    <property type="match status" value="1"/>
</dbReference>